<reference key="1">
    <citation type="journal article" date="2010" name="PLoS Genet.">
        <title>Genome sequence of the plant growth promoting endophytic bacterium Enterobacter sp. 638.</title>
        <authorList>
            <person name="Taghavi S."/>
            <person name="van der Lelie D."/>
            <person name="Hoffman A."/>
            <person name="Zhang Y.B."/>
            <person name="Walla M.D."/>
            <person name="Vangronsveld J."/>
            <person name="Newman L."/>
            <person name="Monchy S."/>
        </authorList>
    </citation>
    <scope>NUCLEOTIDE SEQUENCE [LARGE SCALE GENOMIC DNA]</scope>
    <source>
        <strain>638</strain>
    </source>
</reference>
<sequence>MVTIRLARHGAKKRPFYQVVVTDSRNARNGRFIERVGFFNPLASGAEEETRLDLARVAHWVGLGATVSDRVAALIKAANKAA</sequence>
<feature type="chain" id="PRO_1000060710" description="Small ribosomal subunit protein bS16">
    <location>
        <begin position="1"/>
        <end position="82"/>
    </location>
</feature>
<comment type="similarity">
    <text evidence="1">Belongs to the bacterial ribosomal protein bS16 family.</text>
</comment>
<keyword id="KW-0687">Ribonucleoprotein</keyword>
<keyword id="KW-0689">Ribosomal protein</keyword>
<name>RS16_ENT38</name>
<gene>
    <name evidence="1" type="primary">rpsP</name>
    <name type="ordered locus">Ent638_3090</name>
</gene>
<evidence type="ECO:0000255" key="1">
    <source>
        <dbReference type="HAMAP-Rule" id="MF_00385"/>
    </source>
</evidence>
<evidence type="ECO:0000305" key="2"/>
<organism>
    <name type="scientific">Enterobacter sp. (strain 638)</name>
    <dbReference type="NCBI Taxonomy" id="399742"/>
    <lineage>
        <taxon>Bacteria</taxon>
        <taxon>Pseudomonadati</taxon>
        <taxon>Pseudomonadota</taxon>
        <taxon>Gammaproteobacteria</taxon>
        <taxon>Enterobacterales</taxon>
        <taxon>Enterobacteriaceae</taxon>
        <taxon>Enterobacter</taxon>
    </lineage>
</organism>
<protein>
    <recommendedName>
        <fullName evidence="1">Small ribosomal subunit protein bS16</fullName>
    </recommendedName>
    <alternativeName>
        <fullName evidence="2">30S ribosomal protein S16</fullName>
    </alternativeName>
</protein>
<accession>A4WDH4</accession>
<dbReference type="EMBL" id="CP000653">
    <property type="protein sequence ID" value="ABP61754.1"/>
    <property type="molecule type" value="Genomic_DNA"/>
</dbReference>
<dbReference type="RefSeq" id="WP_015960084.1">
    <property type="nucleotide sequence ID" value="NC_009436.1"/>
</dbReference>
<dbReference type="SMR" id="A4WDH4"/>
<dbReference type="STRING" id="399742.Ent638_3090"/>
<dbReference type="KEGG" id="ent:Ent638_3090"/>
<dbReference type="eggNOG" id="COG0228">
    <property type="taxonomic scope" value="Bacteria"/>
</dbReference>
<dbReference type="HOGENOM" id="CLU_100590_5_1_6"/>
<dbReference type="OrthoDB" id="9807878at2"/>
<dbReference type="Proteomes" id="UP000000230">
    <property type="component" value="Chromosome"/>
</dbReference>
<dbReference type="GO" id="GO:0005737">
    <property type="term" value="C:cytoplasm"/>
    <property type="evidence" value="ECO:0007669"/>
    <property type="project" value="UniProtKB-ARBA"/>
</dbReference>
<dbReference type="GO" id="GO:0015935">
    <property type="term" value="C:small ribosomal subunit"/>
    <property type="evidence" value="ECO:0007669"/>
    <property type="project" value="TreeGrafter"/>
</dbReference>
<dbReference type="GO" id="GO:0003735">
    <property type="term" value="F:structural constituent of ribosome"/>
    <property type="evidence" value="ECO:0007669"/>
    <property type="project" value="InterPro"/>
</dbReference>
<dbReference type="GO" id="GO:0006412">
    <property type="term" value="P:translation"/>
    <property type="evidence" value="ECO:0007669"/>
    <property type="project" value="UniProtKB-UniRule"/>
</dbReference>
<dbReference type="FunFam" id="3.30.1320.10:FF:000001">
    <property type="entry name" value="30S ribosomal protein S16"/>
    <property type="match status" value="1"/>
</dbReference>
<dbReference type="Gene3D" id="3.30.1320.10">
    <property type="match status" value="1"/>
</dbReference>
<dbReference type="HAMAP" id="MF_00385">
    <property type="entry name" value="Ribosomal_bS16"/>
    <property type="match status" value="1"/>
</dbReference>
<dbReference type="InterPro" id="IPR000307">
    <property type="entry name" value="Ribosomal_bS16"/>
</dbReference>
<dbReference type="InterPro" id="IPR020592">
    <property type="entry name" value="Ribosomal_bS16_CS"/>
</dbReference>
<dbReference type="InterPro" id="IPR023803">
    <property type="entry name" value="Ribosomal_bS16_dom_sf"/>
</dbReference>
<dbReference type="NCBIfam" id="TIGR00002">
    <property type="entry name" value="S16"/>
    <property type="match status" value="1"/>
</dbReference>
<dbReference type="PANTHER" id="PTHR12919">
    <property type="entry name" value="30S RIBOSOMAL PROTEIN S16"/>
    <property type="match status" value="1"/>
</dbReference>
<dbReference type="PANTHER" id="PTHR12919:SF20">
    <property type="entry name" value="SMALL RIBOSOMAL SUBUNIT PROTEIN BS16M"/>
    <property type="match status" value="1"/>
</dbReference>
<dbReference type="Pfam" id="PF00886">
    <property type="entry name" value="Ribosomal_S16"/>
    <property type="match status" value="1"/>
</dbReference>
<dbReference type="SUPFAM" id="SSF54565">
    <property type="entry name" value="Ribosomal protein S16"/>
    <property type="match status" value="1"/>
</dbReference>
<dbReference type="PROSITE" id="PS00732">
    <property type="entry name" value="RIBOSOMAL_S16"/>
    <property type="match status" value="1"/>
</dbReference>
<proteinExistence type="inferred from homology"/>